<comment type="similarity">
    <text evidence="1">Belongs to the UPF0246 family.</text>
</comment>
<gene>
    <name evidence="1" type="primary">yaaA</name>
    <name type="ordered locus">EC55989_0006</name>
</gene>
<dbReference type="EMBL" id="CU928145">
    <property type="protein sequence ID" value="CAU95895.1"/>
    <property type="molecule type" value="Genomic_DNA"/>
</dbReference>
<dbReference type="RefSeq" id="WP_000906204.1">
    <property type="nucleotide sequence ID" value="NC_011748.1"/>
</dbReference>
<dbReference type="SMR" id="B7L4D1"/>
<dbReference type="GeneID" id="75203935"/>
<dbReference type="KEGG" id="eck:EC55989_0006"/>
<dbReference type="HOGENOM" id="CLU_061989_0_0_6"/>
<dbReference type="Proteomes" id="UP000000746">
    <property type="component" value="Chromosome"/>
</dbReference>
<dbReference type="GO" id="GO:0005829">
    <property type="term" value="C:cytosol"/>
    <property type="evidence" value="ECO:0007669"/>
    <property type="project" value="TreeGrafter"/>
</dbReference>
<dbReference type="GO" id="GO:0033194">
    <property type="term" value="P:response to hydroperoxide"/>
    <property type="evidence" value="ECO:0007669"/>
    <property type="project" value="TreeGrafter"/>
</dbReference>
<dbReference type="HAMAP" id="MF_00652">
    <property type="entry name" value="UPF0246"/>
    <property type="match status" value="1"/>
</dbReference>
<dbReference type="InterPro" id="IPR005583">
    <property type="entry name" value="YaaA"/>
</dbReference>
<dbReference type="NCBIfam" id="NF002541">
    <property type="entry name" value="PRK02101.1-1"/>
    <property type="match status" value="1"/>
</dbReference>
<dbReference type="NCBIfam" id="NF002542">
    <property type="entry name" value="PRK02101.1-3"/>
    <property type="match status" value="1"/>
</dbReference>
<dbReference type="PANTHER" id="PTHR30283:SF4">
    <property type="entry name" value="PEROXIDE STRESS RESISTANCE PROTEIN YAAA"/>
    <property type="match status" value="1"/>
</dbReference>
<dbReference type="PANTHER" id="PTHR30283">
    <property type="entry name" value="PEROXIDE STRESS RESPONSE PROTEIN YAAA"/>
    <property type="match status" value="1"/>
</dbReference>
<dbReference type="Pfam" id="PF03883">
    <property type="entry name" value="H2O2_YaaD"/>
    <property type="match status" value="1"/>
</dbReference>
<protein>
    <recommendedName>
        <fullName evidence="1">UPF0246 protein YaaA</fullName>
    </recommendedName>
</protein>
<keyword id="KW-1185">Reference proteome</keyword>
<sequence>MLILISPAKTLDYQSPLTTTRYTLPELLDNSQQLIHEARKLTPPQISTLMRISDKLAGINAARFHDWQPDFTPENARQAILAFKGDVYTGLQAETFSEDDFDFAQQHLRMLSGLYGVLRPLDLMQPYRLEMGIRLENARGKDLYQFWGDIITNKLNEALAAQGDNVVINLASDEYFKSVKPKKLNAEIIKPVFLDEKNGKFKIISFYAKKARGLMSRFIIENRLTKPEQLTGFNSEGYFFDEDSSSNGELVFKRYEQR</sequence>
<name>YAAA_ECO55</name>
<evidence type="ECO:0000255" key="1">
    <source>
        <dbReference type="HAMAP-Rule" id="MF_00652"/>
    </source>
</evidence>
<reference key="1">
    <citation type="journal article" date="2009" name="PLoS Genet.">
        <title>Organised genome dynamics in the Escherichia coli species results in highly diverse adaptive paths.</title>
        <authorList>
            <person name="Touchon M."/>
            <person name="Hoede C."/>
            <person name="Tenaillon O."/>
            <person name="Barbe V."/>
            <person name="Baeriswyl S."/>
            <person name="Bidet P."/>
            <person name="Bingen E."/>
            <person name="Bonacorsi S."/>
            <person name="Bouchier C."/>
            <person name="Bouvet O."/>
            <person name="Calteau A."/>
            <person name="Chiapello H."/>
            <person name="Clermont O."/>
            <person name="Cruveiller S."/>
            <person name="Danchin A."/>
            <person name="Diard M."/>
            <person name="Dossat C."/>
            <person name="Karoui M.E."/>
            <person name="Frapy E."/>
            <person name="Garry L."/>
            <person name="Ghigo J.M."/>
            <person name="Gilles A.M."/>
            <person name="Johnson J."/>
            <person name="Le Bouguenec C."/>
            <person name="Lescat M."/>
            <person name="Mangenot S."/>
            <person name="Martinez-Jehanne V."/>
            <person name="Matic I."/>
            <person name="Nassif X."/>
            <person name="Oztas S."/>
            <person name="Petit M.A."/>
            <person name="Pichon C."/>
            <person name="Rouy Z."/>
            <person name="Ruf C.S."/>
            <person name="Schneider D."/>
            <person name="Tourret J."/>
            <person name="Vacherie B."/>
            <person name="Vallenet D."/>
            <person name="Medigue C."/>
            <person name="Rocha E.P.C."/>
            <person name="Denamur E."/>
        </authorList>
    </citation>
    <scope>NUCLEOTIDE SEQUENCE [LARGE SCALE GENOMIC DNA]</scope>
    <source>
        <strain>55989 / EAEC</strain>
    </source>
</reference>
<proteinExistence type="inferred from homology"/>
<organism>
    <name type="scientific">Escherichia coli (strain 55989 / EAEC)</name>
    <dbReference type="NCBI Taxonomy" id="585055"/>
    <lineage>
        <taxon>Bacteria</taxon>
        <taxon>Pseudomonadati</taxon>
        <taxon>Pseudomonadota</taxon>
        <taxon>Gammaproteobacteria</taxon>
        <taxon>Enterobacterales</taxon>
        <taxon>Enterobacteriaceae</taxon>
        <taxon>Escherichia</taxon>
    </lineage>
</organism>
<feature type="chain" id="PRO_1000200418" description="UPF0246 protein YaaA">
    <location>
        <begin position="1"/>
        <end position="258"/>
    </location>
</feature>
<accession>B7L4D1</accession>